<reference key="1">
    <citation type="journal article" date="1996" name="J. Biol. Chem.">
        <title>Functional expression and cellular localization of a mouse epidermal lipoxygenase.</title>
        <authorList>
            <person name="Funk C.D."/>
            <person name="Keeney D.S."/>
            <person name="Oliw E.H."/>
            <person name="Boeglin W.E."/>
            <person name="Brash A.R."/>
        </authorList>
    </citation>
    <scope>NUCLEOTIDE SEQUENCE [MRNA]</scope>
    <scope>FUNCTION</scope>
    <scope>TISSUE SPECIFICITY</scope>
    <scope>CATALYTIC ACTIVITY</scope>
    <source>
        <strain>C57BL/6 X 129/Sv</strain>
        <tissue>Epidermis</tissue>
    </source>
</reference>
<reference key="2">
    <citation type="journal article" date="1995" name="Biochim. Biophys. Acta">
        <title>Genomic and cDNA cloning of a novel mouse lipoxygenase gene.</title>
        <authorList>
            <person name="van Dijk K.W."/>
            <person name="Steketee K."/>
            <person name="Havekes L."/>
            <person name="Frants R."/>
            <person name="Hofker M."/>
        </authorList>
    </citation>
    <scope>NUCLEOTIDE SEQUENCE [GENOMIC DNA]</scope>
    <source>
        <strain>129/Sv</strain>
        <tissue>Epidermis</tissue>
    </source>
</reference>
<reference key="3">
    <citation type="journal article" date="1997" name="FEBS Lett.">
        <title>Murine epidermal lipoxygenase (Aloxe) encodes a 12-lipoxygenase isoform.</title>
        <authorList>
            <person name="Kinzig A."/>
            <person name="Fuerstenberger G."/>
            <person name="Mueller F."/>
            <person name="Vogel S."/>
            <person name="Mueller-Decker K."/>
            <person name="Mincheva A."/>
            <person name="Lichter P."/>
            <person name="Marks F."/>
            <person name="Krieg P."/>
        </authorList>
    </citation>
    <scope>NUCLEOTIDE SEQUENCE [MRNA]</scope>
    <scope>FUNCTION</scope>
    <scope>CATALYTIC ACTIVITY</scope>
    <source>
        <strain>NMRI</strain>
        <tissue>Skin</tissue>
    </source>
</reference>
<reference key="4">
    <citation type="journal article" date="2004" name="Genome Res.">
        <title>The status, quality, and expansion of the NIH full-length cDNA project: the Mammalian Gene Collection (MGC).</title>
        <authorList>
            <consortium name="The MGC Project Team"/>
        </authorList>
    </citation>
    <scope>NUCLEOTIDE SEQUENCE [LARGE SCALE MRNA]</scope>
    <scope>VARIANTS LEU-260; LEU-453 AND SER-617</scope>
    <source>
        <strain>FVB/N</strain>
        <tissue>Mammary tumor</tissue>
    </source>
</reference>
<reference key="5">
    <citation type="journal article" date="2001" name="Biochem. J.">
        <title>Enzymic characterization of epidermis-derived 12-lipoxygenase isoenzymes.</title>
        <authorList>
            <person name="Siebert M."/>
            <person name="Krieg P."/>
            <person name="Lehmann W.D."/>
            <person name="Marks F."/>
            <person name="Fuerstenberger G."/>
        </authorList>
    </citation>
    <scope>CATALYTIC ACTIVITY</scope>
    <scope>FUNCTION</scope>
    <scope>ACTIVITY REGULATION</scope>
</reference>
<accession>P55249</accession>
<accession>Q91YW6</accession>
<proteinExistence type="evidence at protein level"/>
<keyword id="KW-0963">Cytoplasm</keyword>
<keyword id="KW-0223">Dioxygenase</keyword>
<keyword id="KW-0276">Fatty acid metabolism</keyword>
<keyword id="KW-0408">Iron</keyword>
<keyword id="KW-0443">Lipid metabolism</keyword>
<keyword id="KW-0479">Metal-binding</keyword>
<keyword id="KW-0560">Oxidoreductase</keyword>
<keyword id="KW-1185">Reference proteome</keyword>
<sequence length="662" mass="75456">MVKYKILVATGDSVFAGSANLVHLWLVGEHGEADLGKQLRPLLGRKTELEVDVPLHLGRLLAVKLRKQKGLLDSDWFCKSITVQGPGTQGEAFFPCYSWVQGKETICLTEGTALKVTDDTQNLFRKYREQELENRRNVYRWGSWKEGLILPIAGSTERDLPRNQRFMKDKDLDFSLSLVKELKNFAIKGTLDFVSRVQKLEDYQKVFPHTKTALPERVRGSWKEDALFGYQFLNGANPMLLRRSMRLPARLVLPPGMEDVQTQLEKELKAGSLFEVDFSLLDGVKPNIIIFKQQYVTAPLVMLKLQPDGRLLPMVIQLQPPRHGCPPPLLFLPSDPPMAWLLAKIWVRSSDFQLHQLQSHLLRGHLMAEVISVATMRSLPSLHPIYKLLAPHFRYTMEINTLARNNLVSEWGIFDLVVSTGSGGHVDILQRATSCLTYRSFCPPDDLADRGLVGVKSSLYAQDALRLWEIISRYVERMVELFYRSDTDVKEDPELQVWCREVTEVGLLGAQDRGFPLSLESRAELCRFVAMCIFTCTGQHASTHLGQLDWYAWIPNGPCTMRKPPPISKDVTERDIVDSLPCLQQARMQITVTKFLGRRQPVMVALGQHKEEYFSGPRPRDVLKQFQEELAIMDKEIEVRNASLDLPYEYLRPSLVENSVTI</sequence>
<protein>
    <recommendedName>
        <fullName evidence="10">Polyunsaturated fatty acid (12S)/(13S)-lipoxygenase, epidermal-type</fullName>
        <ecNumber evidence="4">1.13.11.-</ecNumber>
    </recommendedName>
    <alternativeName>
        <fullName evidence="10">Arachidonate (12S)-lipoxygenase, epidermal-type</fullName>
        <shortName evidence="1">12-LOX-e</shortName>
        <shortName evidence="8">e(12S)-LOX</shortName>
        <ecNumber evidence="4 6">1.13.11.31</ecNumber>
    </alternativeName>
    <alternativeName>
        <fullName evidence="10">Linoleate (13S)-lipoxygenase</fullName>
    </alternativeName>
</protein>
<evidence type="ECO:0000250" key="1">
    <source>
        <dbReference type="UniProtKB" id="D3ZQF9"/>
    </source>
</evidence>
<evidence type="ECO:0000255" key="2">
    <source>
        <dbReference type="PROSITE-ProRule" id="PRU00152"/>
    </source>
</evidence>
<evidence type="ECO:0000255" key="3">
    <source>
        <dbReference type="PROSITE-ProRule" id="PRU00726"/>
    </source>
</evidence>
<evidence type="ECO:0000269" key="4">
    <source>
    </source>
</evidence>
<evidence type="ECO:0000269" key="5">
    <source>
    </source>
</evidence>
<evidence type="ECO:0000269" key="6">
    <source>
    </source>
</evidence>
<evidence type="ECO:0000269" key="7">
    <source>
    </source>
</evidence>
<evidence type="ECO:0000303" key="8">
    <source>
    </source>
</evidence>
<evidence type="ECO:0000303" key="9">
    <source>
    </source>
</evidence>
<evidence type="ECO:0000305" key="10"/>
<evidence type="ECO:0000305" key="11">
    <source>
    </source>
</evidence>
<evidence type="ECO:0000305" key="12">
    <source>
    </source>
</evidence>
<evidence type="ECO:0000312" key="13">
    <source>
        <dbReference type="MGI" id="MGI:1274790"/>
    </source>
</evidence>
<gene>
    <name evidence="13" type="primary">Alox12e</name>
    <name type="synonym">Alox12-ps2</name>
    <name evidence="9" type="synonym">Aloxe</name>
</gene>
<dbReference type="EC" id="1.13.11.-" evidence="4"/>
<dbReference type="EC" id="1.13.11.31" evidence="4 6"/>
<dbReference type="EMBL" id="U39200">
    <property type="protein sequence ID" value="AAC52869.1"/>
    <property type="molecule type" value="mRNA"/>
</dbReference>
<dbReference type="EMBL" id="U24181">
    <property type="protein sequence ID" value="AAC52324.1"/>
    <property type="molecule type" value="Genomic_DNA"/>
</dbReference>
<dbReference type="EMBL" id="X99252">
    <property type="protein sequence ID" value="CAA67625.1"/>
    <property type="molecule type" value="mRNA"/>
</dbReference>
<dbReference type="EMBL" id="BC013751">
    <property type="protein sequence ID" value="AAH13751.1"/>
    <property type="molecule type" value="mRNA"/>
</dbReference>
<dbReference type="EMBL" id="BC051047">
    <property type="protein sequence ID" value="AAH51047.1"/>
    <property type="molecule type" value="mRNA"/>
</dbReference>
<dbReference type="CCDS" id="CCDS24943.1"/>
<dbReference type="RefSeq" id="NP_663717.1">
    <property type="nucleotide sequence ID" value="NM_145684.2"/>
</dbReference>
<dbReference type="SMR" id="P55249"/>
<dbReference type="FunCoup" id="P55249">
    <property type="interactions" value="119"/>
</dbReference>
<dbReference type="STRING" id="10090.ENSMUSP00000019051"/>
<dbReference type="SwissLipids" id="SLP:000000685"/>
<dbReference type="iPTMnet" id="P55249"/>
<dbReference type="PhosphoSitePlus" id="P55249"/>
<dbReference type="PaxDb" id="10090-ENSMUSP00000019051"/>
<dbReference type="PeptideAtlas" id="P55249"/>
<dbReference type="ProteomicsDB" id="292055"/>
<dbReference type="DNASU" id="11685"/>
<dbReference type="Ensembl" id="ENSMUST00000019051.3">
    <property type="protein sequence ID" value="ENSMUSP00000019051.3"/>
    <property type="gene ID" value="ENSMUSG00000018907.11"/>
</dbReference>
<dbReference type="GeneID" id="11685"/>
<dbReference type="KEGG" id="mmu:11685"/>
<dbReference type="UCSC" id="uc007jun.1">
    <property type="organism name" value="mouse"/>
</dbReference>
<dbReference type="AGR" id="MGI:1274790"/>
<dbReference type="CTD" id="11685"/>
<dbReference type="MGI" id="MGI:1274790">
    <property type="gene designation" value="Alox12e"/>
</dbReference>
<dbReference type="VEuPathDB" id="HostDB:ENSMUSG00000018907"/>
<dbReference type="eggNOG" id="ENOG502QQSP">
    <property type="taxonomic scope" value="Eukaryota"/>
</dbReference>
<dbReference type="GeneTree" id="ENSGT00940000163215"/>
<dbReference type="HOGENOM" id="CLU_004282_3_3_1"/>
<dbReference type="InParanoid" id="P55249"/>
<dbReference type="OMA" id="QKTFTKF"/>
<dbReference type="OrthoDB" id="407298at2759"/>
<dbReference type="PhylomeDB" id="P55249"/>
<dbReference type="TreeFam" id="TF105320"/>
<dbReference type="UniPathway" id="UPA00881"/>
<dbReference type="BioGRID-ORCS" id="11685">
    <property type="hits" value="6 hits in 79 CRISPR screens"/>
</dbReference>
<dbReference type="PRO" id="PR:P55249"/>
<dbReference type="Proteomes" id="UP000000589">
    <property type="component" value="Chromosome 11"/>
</dbReference>
<dbReference type="RNAct" id="P55249">
    <property type="molecule type" value="protein"/>
</dbReference>
<dbReference type="Bgee" id="ENSMUSG00000018907">
    <property type="expression patterns" value="Expressed in skin of external ear and 44 other cell types or tissues"/>
</dbReference>
<dbReference type="ExpressionAtlas" id="P55249">
    <property type="expression patterns" value="baseline and differential"/>
</dbReference>
<dbReference type="GO" id="GO:0005737">
    <property type="term" value="C:cytoplasm"/>
    <property type="evidence" value="ECO:0007669"/>
    <property type="project" value="UniProtKB-SubCell"/>
</dbReference>
<dbReference type="GO" id="GO:0004052">
    <property type="term" value="F:arachidonate 12(S)-lipoxygenase activity"/>
    <property type="evidence" value="ECO:0000315"/>
    <property type="project" value="UniProtKB"/>
</dbReference>
<dbReference type="GO" id="GO:0005506">
    <property type="term" value="F:iron ion binding"/>
    <property type="evidence" value="ECO:0007669"/>
    <property type="project" value="InterPro"/>
</dbReference>
<dbReference type="GO" id="GO:0016165">
    <property type="term" value="F:linoleate 13S-lipoxygenase activity"/>
    <property type="evidence" value="ECO:0000315"/>
    <property type="project" value="UniProtKB"/>
</dbReference>
<dbReference type="GO" id="GO:0019369">
    <property type="term" value="P:arachidonate metabolic process"/>
    <property type="evidence" value="ECO:0000315"/>
    <property type="project" value="UniProtKB"/>
</dbReference>
<dbReference type="GO" id="GO:0034440">
    <property type="term" value="P:lipid oxidation"/>
    <property type="evidence" value="ECO:0007669"/>
    <property type="project" value="InterPro"/>
</dbReference>
<dbReference type="GO" id="GO:0019372">
    <property type="term" value="P:lipoxygenase pathway"/>
    <property type="evidence" value="ECO:0000315"/>
    <property type="project" value="UniProtKB"/>
</dbReference>
<dbReference type="CDD" id="cd01753">
    <property type="entry name" value="PLAT_LOX"/>
    <property type="match status" value="1"/>
</dbReference>
<dbReference type="FunFam" id="3.10.450.60:FF:000004">
    <property type="entry name" value="Arachidonate 12-lipoxygenase, 12S-type"/>
    <property type="match status" value="1"/>
</dbReference>
<dbReference type="FunFam" id="1.20.245.10:FF:000001">
    <property type="entry name" value="Arachidonate 5-lipoxygenase a"/>
    <property type="match status" value="1"/>
</dbReference>
<dbReference type="Gene3D" id="3.10.450.60">
    <property type="match status" value="1"/>
</dbReference>
<dbReference type="Gene3D" id="1.20.245.10">
    <property type="entry name" value="Lipoxygenase-1, Domain 5"/>
    <property type="match status" value="1"/>
</dbReference>
<dbReference type="Gene3D" id="2.60.60.20">
    <property type="entry name" value="PLAT/LH2 domain"/>
    <property type="match status" value="1"/>
</dbReference>
<dbReference type="InterPro" id="IPR000907">
    <property type="entry name" value="LipOase"/>
</dbReference>
<dbReference type="InterPro" id="IPR013819">
    <property type="entry name" value="LipOase_C"/>
</dbReference>
<dbReference type="InterPro" id="IPR036226">
    <property type="entry name" value="LipOase_C_sf"/>
</dbReference>
<dbReference type="InterPro" id="IPR020834">
    <property type="entry name" value="LipOase_CS"/>
</dbReference>
<dbReference type="InterPro" id="IPR020833">
    <property type="entry name" value="LipOase_Fe_BS"/>
</dbReference>
<dbReference type="InterPro" id="IPR001885">
    <property type="entry name" value="LipOase_mml"/>
</dbReference>
<dbReference type="InterPro" id="IPR001024">
    <property type="entry name" value="PLAT/LH2_dom"/>
</dbReference>
<dbReference type="InterPro" id="IPR036392">
    <property type="entry name" value="PLAT/LH2_dom_sf"/>
</dbReference>
<dbReference type="InterPro" id="IPR042062">
    <property type="entry name" value="PLAT_LOX_verte"/>
</dbReference>
<dbReference type="PANTHER" id="PTHR11771">
    <property type="entry name" value="LIPOXYGENASE"/>
    <property type="match status" value="1"/>
</dbReference>
<dbReference type="Pfam" id="PF00305">
    <property type="entry name" value="Lipoxygenase"/>
    <property type="match status" value="1"/>
</dbReference>
<dbReference type="Pfam" id="PF01477">
    <property type="entry name" value="PLAT"/>
    <property type="match status" value="1"/>
</dbReference>
<dbReference type="PRINTS" id="PR00087">
    <property type="entry name" value="LIPOXYGENASE"/>
</dbReference>
<dbReference type="PRINTS" id="PR00467">
    <property type="entry name" value="MAMLPOXGNASE"/>
</dbReference>
<dbReference type="SMART" id="SM00308">
    <property type="entry name" value="LH2"/>
    <property type="match status" value="1"/>
</dbReference>
<dbReference type="SUPFAM" id="SSF49723">
    <property type="entry name" value="Lipase/lipooxygenase domain (PLAT/LH2 domain)"/>
    <property type="match status" value="1"/>
</dbReference>
<dbReference type="SUPFAM" id="SSF48484">
    <property type="entry name" value="Lipoxigenase"/>
    <property type="match status" value="1"/>
</dbReference>
<dbReference type="PROSITE" id="PS00711">
    <property type="entry name" value="LIPOXYGENASE_1"/>
    <property type="match status" value="1"/>
</dbReference>
<dbReference type="PROSITE" id="PS00081">
    <property type="entry name" value="LIPOXYGENASE_2"/>
    <property type="match status" value="1"/>
</dbReference>
<dbReference type="PROSITE" id="PS51393">
    <property type="entry name" value="LIPOXYGENASE_3"/>
    <property type="match status" value="1"/>
</dbReference>
<dbReference type="PROSITE" id="PS50095">
    <property type="entry name" value="PLAT"/>
    <property type="match status" value="1"/>
</dbReference>
<organism>
    <name type="scientific">Mus musculus</name>
    <name type="common">Mouse</name>
    <dbReference type="NCBI Taxonomy" id="10090"/>
    <lineage>
        <taxon>Eukaryota</taxon>
        <taxon>Metazoa</taxon>
        <taxon>Chordata</taxon>
        <taxon>Craniata</taxon>
        <taxon>Vertebrata</taxon>
        <taxon>Euteleostomi</taxon>
        <taxon>Mammalia</taxon>
        <taxon>Eutheria</taxon>
        <taxon>Euarchontoglires</taxon>
        <taxon>Glires</taxon>
        <taxon>Rodentia</taxon>
        <taxon>Myomorpha</taxon>
        <taxon>Muroidea</taxon>
        <taxon>Muridae</taxon>
        <taxon>Murinae</taxon>
        <taxon>Mus</taxon>
        <taxon>Mus</taxon>
    </lineage>
</organism>
<feature type="chain" id="PRO_0000220688" description="Polyunsaturated fatty acid (12S)/(13S)-lipoxygenase, epidermal-type">
    <location>
        <begin position="1"/>
        <end position="662"/>
    </location>
</feature>
<feature type="domain" description="PLAT" evidence="2">
    <location>
        <begin position="2"/>
        <end position="114"/>
    </location>
</feature>
<feature type="domain" description="Lipoxygenase" evidence="3">
    <location>
        <begin position="115"/>
        <end position="662"/>
    </location>
</feature>
<feature type="binding site" evidence="3">
    <location>
        <position position="360"/>
    </location>
    <ligand>
        <name>Fe cation</name>
        <dbReference type="ChEBI" id="CHEBI:24875"/>
        <note>catalytic</note>
    </ligand>
</feature>
<feature type="binding site" evidence="3">
    <location>
        <position position="365"/>
    </location>
    <ligand>
        <name>Fe cation</name>
        <dbReference type="ChEBI" id="CHEBI:24875"/>
        <note>catalytic</note>
    </ligand>
</feature>
<feature type="binding site" evidence="3">
    <location>
        <position position="540"/>
    </location>
    <ligand>
        <name>Fe cation</name>
        <dbReference type="ChEBI" id="CHEBI:24875"/>
        <note>catalytic</note>
    </ligand>
</feature>
<feature type="binding site" evidence="3">
    <location>
        <position position="662"/>
    </location>
    <ligand>
        <name>Fe cation</name>
        <dbReference type="ChEBI" id="CHEBI:24875"/>
        <note>catalytic</note>
    </ligand>
</feature>
<feature type="sequence variant" description="In strain: FVB/N." evidence="5">
    <original>V</original>
    <variation>L</variation>
    <location>
        <position position="260"/>
    </location>
</feature>
<feature type="sequence variant" description="In strain: FVB/N." evidence="5">
    <original>V</original>
    <variation>L</variation>
    <location>
        <position position="453"/>
    </location>
</feature>
<feature type="sequence variant" description="In strain: FVB/N." evidence="5">
    <original>P</original>
    <variation>S</variation>
    <location>
        <position position="617"/>
    </location>
</feature>
<feature type="sequence conflict" description="In Ref. 2; AAC52324." evidence="10" ref="2">
    <original>P</original>
    <variation>A</variation>
    <location>
        <position position="619"/>
    </location>
</feature>
<name>LX12E_MOUSE</name>
<comment type="function">
    <text evidence="4 6 7">Catalyzes the regio and stereo-specific incorporation of a single molecule of dioxygen into free and esterified polyunsaturated fatty acids generating lipid hydroperoxides that can be further reduced to the corresponding hydroxy species (PubMed:11256953, PubMed:8798535, PubMed:9037187). Shows increasing catalytic activity within the series arachidonic acid &lt; 5,8,11-eicosatrienoic acid &lt; linoleic acid &lt; 8,11,14-eicosatrienoic acid (PubMed:11256953).</text>
</comment>
<comment type="catalytic activity">
    <reaction evidence="4 6 7">
        <text>(5Z,8Z,11Z,14Z)-eicosatetraenoate + O2 = (12S)-hydroperoxy-(5Z,8Z,10E,14Z)-eicosatetraenoate</text>
        <dbReference type="Rhea" id="RHEA:10428"/>
        <dbReference type="ChEBI" id="CHEBI:15379"/>
        <dbReference type="ChEBI" id="CHEBI:32395"/>
        <dbReference type="ChEBI" id="CHEBI:57444"/>
        <dbReference type="EC" id="1.13.11.31"/>
    </reaction>
    <physiologicalReaction direction="left-to-right" evidence="11 12">
        <dbReference type="Rhea" id="RHEA:10429"/>
    </physiologicalReaction>
</comment>
<comment type="catalytic activity">
    <reaction evidence="4">
        <text>1-O-methyl-(9Z,12Z)-octadecadienoate + O2 = 1-O-methyl-(13S)-hydroperoxy-(9Z,11E)-octadecadienoate</text>
        <dbReference type="Rhea" id="RHEA:41756"/>
        <dbReference type="ChEBI" id="CHEBI:15379"/>
        <dbReference type="ChEBI" id="CHEBI:69080"/>
        <dbReference type="ChEBI" id="CHEBI:78040"/>
    </reaction>
    <physiologicalReaction direction="left-to-right" evidence="11">
        <dbReference type="Rhea" id="RHEA:41757"/>
    </physiologicalReaction>
</comment>
<comment type="catalytic activity">
    <reaction evidence="4">
        <text>(8Z,11Z,14Z)-eicosatrienoate + O2 = (12S)-hydroperoxy-(8Z,10E,14Z)-eicosatrienoate</text>
        <dbReference type="Rhea" id="RHEA:41328"/>
        <dbReference type="ChEBI" id="CHEBI:15379"/>
        <dbReference type="ChEBI" id="CHEBI:71589"/>
        <dbReference type="ChEBI" id="CHEBI:78047"/>
    </reaction>
    <physiologicalReaction direction="left-to-right" evidence="11">
        <dbReference type="Rhea" id="RHEA:41329"/>
    </physiologicalReaction>
</comment>
<comment type="catalytic activity">
    <reaction evidence="4">
        <text>(5Z,8Z,11Z)-eicosatrienoate + O2 = (12S)-hydroperoxy-(5Z,8Z,10E)-eicosatrienoate</text>
        <dbReference type="Rhea" id="RHEA:41324"/>
        <dbReference type="ChEBI" id="CHEBI:15379"/>
        <dbReference type="ChEBI" id="CHEBI:78043"/>
        <dbReference type="ChEBI" id="CHEBI:78046"/>
    </reaction>
    <physiologicalReaction direction="left-to-right" evidence="11">
        <dbReference type="Rhea" id="RHEA:41325"/>
    </physiologicalReaction>
</comment>
<comment type="catalytic activity">
    <reaction evidence="4">
        <text>1-O-methyl-(5Z,8Z,11Z,14Z)-eicosatetraenoate + O2 = 1-O-methyl-(12S)-hydroperoxy-(5Z,8Z,10E,14Z)-eicosatetraenoate</text>
        <dbReference type="Rhea" id="RHEA:41315"/>
        <dbReference type="ChEBI" id="CHEBI:15379"/>
        <dbReference type="ChEBI" id="CHEBI:78033"/>
        <dbReference type="ChEBI" id="CHEBI:78035"/>
    </reaction>
    <physiologicalReaction direction="left-to-right" evidence="11">
        <dbReference type="Rhea" id="RHEA:41316"/>
    </physiologicalReaction>
</comment>
<comment type="catalytic activity">
    <reaction evidence="4">
        <text>(9Z,12Z)-octadecadienoate + O2 = (13S)-hydroperoxy-(9Z,11E)-octadecadienoate</text>
        <dbReference type="Rhea" id="RHEA:22780"/>
        <dbReference type="ChEBI" id="CHEBI:15379"/>
        <dbReference type="ChEBI" id="CHEBI:30245"/>
        <dbReference type="ChEBI" id="CHEBI:57466"/>
    </reaction>
    <physiologicalReaction direction="left-to-right" evidence="11">
        <dbReference type="Rhea" id="RHEA:22781"/>
    </physiologicalReaction>
</comment>
<comment type="catalytic activity">
    <reaction evidence="4">
        <text>(4Z,7Z,10Z,13Z,16Z,19Z)-docosahexaenoate + O2 = (14S)-hydroperoxy-(4Z,7Z,10Z,12E,16Z,19Z)-docosahexaenoate</text>
        <dbReference type="Rhea" id="RHEA:41332"/>
        <dbReference type="ChEBI" id="CHEBI:15379"/>
        <dbReference type="ChEBI" id="CHEBI:77016"/>
        <dbReference type="ChEBI" id="CHEBI:78048"/>
    </reaction>
    <physiologicalReaction direction="left-to-right" evidence="11">
        <dbReference type="Rhea" id="RHEA:41333"/>
    </physiologicalReaction>
</comment>
<comment type="cofactor">
    <cofactor evidence="3">
        <name>Fe cation</name>
        <dbReference type="ChEBI" id="CHEBI:24875"/>
    </cofactor>
    <text evidence="3">Binds 1 Fe cation per subunit.</text>
</comment>
<comment type="activity regulation">
    <text evidence="4">Arachidonate 12-lipoxygenase activity is decreased when the pH decreases from 7.4 to 6.0.</text>
</comment>
<comment type="pathway">
    <text>Lipid metabolism; hydroperoxy eicosatetraenoic acid biosynthesis.</text>
</comment>
<comment type="subcellular location">
    <subcellularLocation>
        <location evidence="3">Cytoplasm</location>
    </subcellularLocation>
</comment>
<comment type="tissue specificity">
    <text evidence="6">Expressed in epidermis.</text>
</comment>
<comment type="similarity">
    <text evidence="10">Belongs to the lipoxygenase family.</text>
</comment>
<comment type="caution">
    <text evidence="10">Was originally thought to be an arachidonate 8-lipoxygenase and was called LOX8.</text>
</comment>